<reference key="1">
    <citation type="journal article" date="2003" name="Genome Res.">
        <title>Genome sequence of an M3 strain of Streptococcus pyogenes reveals a large-scale genomic rearrangement in invasive strains and new insights into phage evolution.</title>
        <authorList>
            <person name="Nakagawa I."/>
            <person name="Kurokawa K."/>
            <person name="Yamashita A."/>
            <person name="Nakata M."/>
            <person name="Tomiyasu Y."/>
            <person name="Okahashi N."/>
            <person name="Kawabata S."/>
            <person name="Yamazaki K."/>
            <person name="Shiba T."/>
            <person name="Yasunaga T."/>
            <person name="Hayashi H."/>
            <person name="Hattori M."/>
            <person name="Hamada S."/>
        </authorList>
    </citation>
    <scope>NUCLEOTIDE SEQUENCE [LARGE SCALE GENOMIC DNA]</scope>
    <source>
        <strain>SSI-1</strain>
    </source>
</reference>
<name>ACCD_STRPQ</name>
<feature type="chain" id="PRO_0000411260" description="Acetyl-coenzyme A carboxylase carboxyl transferase subunit beta">
    <location>
        <begin position="1"/>
        <end position="288"/>
    </location>
</feature>
<feature type="domain" description="CoA carboxyltransferase N-terminal" evidence="2">
    <location>
        <begin position="34"/>
        <end position="288"/>
    </location>
</feature>
<feature type="zinc finger region" description="C4-type" evidence="1">
    <location>
        <begin position="38"/>
        <end position="59"/>
    </location>
</feature>
<feature type="binding site" evidence="1">
    <location>
        <position position="38"/>
    </location>
    <ligand>
        <name>Zn(2+)</name>
        <dbReference type="ChEBI" id="CHEBI:29105"/>
    </ligand>
</feature>
<feature type="binding site" evidence="1">
    <location>
        <position position="41"/>
    </location>
    <ligand>
        <name>Zn(2+)</name>
        <dbReference type="ChEBI" id="CHEBI:29105"/>
    </ligand>
</feature>
<feature type="binding site" evidence="1">
    <location>
        <position position="56"/>
    </location>
    <ligand>
        <name>Zn(2+)</name>
        <dbReference type="ChEBI" id="CHEBI:29105"/>
    </ligand>
</feature>
<feature type="binding site" evidence="1">
    <location>
        <position position="59"/>
    </location>
    <ligand>
        <name>Zn(2+)</name>
        <dbReference type="ChEBI" id="CHEBI:29105"/>
    </ligand>
</feature>
<organism>
    <name type="scientific">Streptococcus pyogenes serotype M3 (strain SSI-1)</name>
    <dbReference type="NCBI Taxonomy" id="193567"/>
    <lineage>
        <taxon>Bacteria</taxon>
        <taxon>Bacillati</taxon>
        <taxon>Bacillota</taxon>
        <taxon>Bacilli</taxon>
        <taxon>Lactobacillales</taxon>
        <taxon>Streptococcaceae</taxon>
        <taxon>Streptococcus</taxon>
    </lineage>
</organism>
<accession>P0CZ45</accession>
<accession>Q79YC0</accession>
<accession>Q8K633</accession>
<gene>
    <name evidence="1" type="primary">accD</name>
    <name type="ordered locus">SPs0348</name>
</gene>
<keyword id="KW-0067">ATP-binding</keyword>
<keyword id="KW-0963">Cytoplasm</keyword>
<keyword id="KW-0275">Fatty acid biosynthesis</keyword>
<keyword id="KW-0276">Fatty acid metabolism</keyword>
<keyword id="KW-0444">Lipid biosynthesis</keyword>
<keyword id="KW-0443">Lipid metabolism</keyword>
<keyword id="KW-0479">Metal-binding</keyword>
<keyword id="KW-0547">Nucleotide-binding</keyword>
<keyword id="KW-0808">Transferase</keyword>
<keyword id="KW-0862">Zinc</keyword>
<keyword id="KW-0863">Zinc-finger</keyword>
<sequence>MALFRKKDKYIRITPNNSLKGSVSHNVPEVPDELFAKCPACKHMIYKKDLGLAKICPTCSYNFRISAQERLTLTVDEGSFQELFISIETKDPLRFPGYQEKLQKAKETTGLHEAVLTGKAMVKGQQIALAIMDSHFIMASMGTVVGEKITRLFELAIEENLPVVIFTASGGARMQEGIMSLMQMAKVSAAVKRHSNAGLFYLTILTDPTTGGVTASFAMEGDIILAEPQSLVGFAGRRVIETTVRENLPDDFQKAEFLQDHGFVDAIVKRTELRDKIAHLVAFHGGGQ</sequence>
<protein>
    <recommendedName>
        <fullName evidence="1">Acetyl-coenzyme A carboxylase carboxyl transferase subunit beta</fullName>
        <shortName evidence="1">ACCase subunit beta</shortName>
        <shortName evidence="1">Acetyl-CoA carboxylase carboxyltransferase subunit beta</shortName>
        <ecNumber evidence="1">2.1.3.15</ecNumber>
    </recommendedName>
</protein>
<evidence type="ECO:0000255" key="1">
    <source>
        <dbReference type="HAMAP-Rule" id="MF_01395"/>
    </source>
</evidence>
<evidence type="ECO:0000255" key="2">
    <source>
        <dbReference type="PROSITE-ProRule" id="PRU01136"/>
    </source>
</evidence>
<proteinExistence type="inferred from homology"/>
<dbReference type="EC" id="2.1.3.15" evidence="1"/>
<dbReference type="EMBL" id="BA000034">
    <property type="protein sequence ID" value="BAC63443.1"/>
    <property type="molecule type" value="Genomic_DNA"/>
</dbReference>
<dbReference type="RefSeq" id="WP_002993759.1">
    <property type="nucleotide sequence ID" value="NC_004606.1"/>
</dbReference>
<dbReference type="SMR" id="P0CZ45"/>
<dbReference type="KEGG" id="sps:SPs0348"/>
<dbReference type="HOGENOM" id="CLU_015486_1_1_9"/>
<dbReference type="UniPathway" id="UPA00655">
    <property type="reaction ID" value="UER00711"/>
</dbReference>
<dbReference type="GO" id="GO:0009317">
    <property type="term" value="C:acetyl-CoA carboxylase complex"/>
    <property type="evidence" value="ECO:0007669"/>
    <property type="project" value="InterPro"/>
</dbReference>
<dbReference type="GO" id="GO:0003989">
    <property type="term" value="F:acetyl-CoA carboxylase activity"/>
    <property type="evidence" value="ECO:0007669"/>
    <property type="project" value="InterPro"/>
</dbReference>
<dbReference type="GO" id="GO:0005524">
    <property type="term" value="F:ATP binding"/>
    <property type="evidence" value="ECO:0007669"/>
    <property type="project" value="UniProtKB-KW"/>
</dbReference>
<dbReference type="GO" id="GO:0016743">
    <property type="term" value="F:carboxyl- or carbamoyltransferase activity"/>
    <property type="evidence" value="ECO:0007669"/>
    <property type="project" value="UniProtKB-UniRule"/>
</dbReference>
<dbReference type="GO" id="GO:0008270">
    <property type="term" value="F:zinc ion binding"/>
    <property type="evidence" value="ECO:0007669"/>
    <property type="project" value="UniProtKB-UniRule"/>
</dbReference>
<dbReference type="GO" id="GO:0006633">
    <property type="term" value="P:fatty acid biosynthetic process"/>
    <property type="evidence" value="ECO:0007669"/>
    <property type="project" value="UniProtKB-KW"/>
</dbReference>
<dbReference type="GO" id="GO:2001295">
    <property type="term" value="P:malonyl-CoA biosynthetic process"/>
    <property type="evidence" value="ECO:0007669"/>
    <property type="project" value="UniProtKB-UniRule"/>
</dbReference>
<dbReference type="Gene3D" id="3.90.226.10">
    <property type="entry name" value="2-enoyl-CoA Hydratase, Chain A, domain 1"/>
    <property type="match status" value="1"/>
</dbReference>
<dbReference type="HAMAP" id="MF_01395">
    <property type="entry name" value="AcetylCoA_CT_beta"/>
    <property type="match status" value="1"/>
</dbReference>
<dbReference type="InterPro" id="IPR034733">
    <property type="entry name" value="AcCoA_carboxyl_beta"/>
</dbReference>
<dbReference type="InterPro" id="IPR000438">
    <property type="entry name" value="Acetyl_CoA_COase_Trfase_b_su"/>
</dbReference>
<dbReference type="InterPro" id="IPR029045">
    <property type="entry name" value="ClpP/crotonase-like_dom_sf"/>
</dbReference>
<dbReference type="InterPro" id="IPR011762">
    <property type="entry name" value="COA_CT_N"/>
</dbReference>
<dbReference type="NCBIfam" id="TIGR00515">
    <property type="entry name" value="accD"/>
    <property type="match status" value="1"/>
</dbReference>
<dbReference type="PANTHER" id="PTHR42995">
    <property type="entry name" value="ACETYL-COENZYME A CARBOXYLASE CARBOXYL TRANSFERASE SUBUNIT BETA, CHLOROPLASTIC"/>
    <property type="match status" value="1"/>
</dbReference>
<dbReference type="PANTHER" id="PTHR42995:SF5">
    <property type="entry name" value="ACETYL-COENZYME A CARBOXYLASE CARBOXYL TRANSFERASE SUBUNIT BETA, CHLOROPLASTIC"/>
    <property type="match status" value="1"/>
</dbReference>
<dbReference type="Pfam" id="PF01039">
    <property type="entry name" value="Carboxyl_trans"/>
    <property type="match status" value="1"/>
</dbReference>
<dbReference type="PRINTS" id="PR01070">
    <property type="entry name" value="ACCCTRFRASEB"/>
</dbReference>
<dbReference type="SUPFAM" id="SSF52096">
    <property type="entry name" value="ClpP/crotonase"/>
    <property type="match status" value="1"/>
</dbReference>
<dbReference type="PROSITE" id="PS50980">
    <property type="entry name" value="COA_CT_NTER"/>
    <property type="match status" value="1"/>
</dbReference>
<comment type="function">
    <text evidence="1">Component of the acetyl coenzyme A carboxylase (ACC) complex. Biotin carboxylase (BC) catalyzes the carboxylation of biotin on its carrier protein (BCCP) and then the CO(2) group is transferred by the transcarboxylase to acetyl-CoA to form malonyl-CoA.</text>
</comment>
<comment type="catalytic activity">
    <reaction evidence="1">
        <text>N(6)-carboxybiotinyl-L-lysyl-[protein] + acetyl-CoA = N(6)-biotinyl-L-lysyl-[protein] + malonyl-CoA</text>
        <dbReference type="Rhea" id="RHEA:54728"/>
        <dbReference type="Rhea" id="RHEA-COMP:10505"/>
        <dbReference type="Rhea" id="RHEA-COMP:10506"/>
        <dbReference type="ChEBI" id="CHEBI:57288"/>
        <dbReference type="ChEBI" id="CHEBI:57384"/>
        <dbReference type="ChEBI" id="CHEBI:83144"/>
        <dbReference type="ChEBI" id="CHEBI:83145"/>
        <dbReference type="EC" id="2.1.3.15"/>
    </reaction>
</comment>
<comment type="cofactor">
    <cofactor evidence="1">
        <name>Zn(2+)</name>
        <dbReference type="ChEBI" id="CHEBI:29105"/>
    </cofactor>
    <text evidence="1">Binds 1 zinc ion per subunit.</text>
</comment>
<comment type="pathway">
    <text evidence="1">Lipid metabolism; malonyl-CoA biosynthesis; malonyl-CoA from acetyl-CoA: step 1/1.</text>
</comment>
<comment type="subunit">
    <text evidence="1">Acetyl-CoA carboxylase is a heterohexamer composed of biotin carboxyl carrier protein (AccB), biotin carboxylase (AccC) and two subunits each of ACCase subunit alpha (AccA) and ACCase subunit beta (AccD).</text>
</comment>
<comment type="subcellular location">
    <subcellularLocation>
        <location evidence="1">Cytoplasm</location>
    </subcellularLocation>
</comment>
<comment type="similarity">
    <text evidence="1">Belongs to the AccD/PCCB family.</text>
</comment>